<sequence>MTKSELIEKLATRQSQLSAKEVEGAIKEMLEQMATTLESGDRIEIRGFGSFSLHYRAPRTGRNPKTGSSVDLEGKYVPHFKPGKELRERVDAVNV</sequence>
<gene>
    <name evidence="1" type="primary">ihfB</name>
    <name evidence="1" type="synonym">himD</name>
    <name type="ordered locus">Sbal_2071</name>
</gene>
<evidence type="ECO:0000255" key="1">
    <source>
        <dbReference type="HAMAP-Rule" id="MF_00381"/>
    </source>
</evidence>
<evidence type="ECO:0000256" key="2">
    <source>
        <dbReference type="SAM" id="MobiDB-lite"/>
    </source>
</evidence>
<feature type="chain" id="PRO_1000060654" description="Integration host factor subunit beta">
    <location>
        <begin position="1"/>
        <end position="95"/>
    </location>
</feature>
<feature type="region of interest" description="Disordered" evidence="2">
    <location>
        <begin position="56"/>
        <end position="76"/>
    </location>
</feature>
<protein>
    <recommendedName>
        <fullName evidence="1">Integration host factor subunit beta</fullName>
        <shortName evidence="1">IHF-beta</shortName>
    </recommendedName>
</protein>
<proteinExistence type="inferred from homology"/>
<name>IHFB_SHEB5</name>
<keyword id="KW-0233">DNA recombination</keyword>
<keyword id="KW-0238">DNA-binding</keyword>
<keyword id="KW-1185">Reference proteome</keyword>
<keyword id="KW-0804">Transcription</keyword>
<keyword id="KW-0805">Transcription regulation</keyword>
<keyword id="KW-0810">Translation regulation</keyword>
<dbReference type="EMBL" id="CP000563">
    <property type="protein sequence ID" value="ABN61572.1"/>
    <property type="molecule type" value="Genomic_DNA"/>
</dbReference>
<dbReference type="RefSeq" id="WP_006081718.1">
    <property type="nucleotide sequence ID" value="NC_009052.1"/>
</dbReference>
<dbReference type="SMR" id="A3D4A9"/>
<dbReference type="STRING" id="325240.Sbal_2071"/>
<dbReference type="GeneID" id="11772512"/>
<dbReference type="KEGG" id="sbl:Sbal_2071"/>
<dbReference type="HOGENOM" id="CLU_105066_2_0_6"/>
<dbReference type="OrthoDB" id="9804203at2"/>
<dbReference type="Proteomes" id="UP000001557">
    <property type="component" value="Chromosome"/>
</dbReference>
<dbReference type="GO" id="GO:0005694">
    <property type="term" value="C:chromosome"/>
    <property type="evidence" value="ECO:0007669"/>
    <property type="project" value="InterPro"/>
</dbReference>
<dbReference type="GO" id="GO:0005829">
    <property type="term" value="C:cytosol"/>
    <property type="evidence" value="ECO:0007669"/>
    <property type="project" value="TreeGrafter"/>
</dbReference>
<dbReference type="GO" id="GO:0003677">
    <property type="term" value="F:DNA binding"/>
    <property type="evidence" value="ECO:0007669"/>
    <property type="project" value="UniProtKB-UniRule"/>
</dbReference>
<dbReference type="GO" id="GO:0030527">
    <property type="term" value="F:structural constituent of chromatin"/>
    <property type="evidence" value="ECO:0007669"/>
    <property type="project" value="InterPro"/>
</dbReference>
<dbReference type="GO" id="GO:0006310">
    <property type="term" value="P:DNA recombination"/>
    <property type="evidence" value="ECO:0007669"/>
    <property type="project" value="UniProtKB-UniRule"/>
</dbReference>
<dbReference type="GO" id="GO:0006355">
    <property type="term" value="P:regulation of DNA-templated transcription"/>
    <property type="evidence" value="ECO:0007669"/>
    <property type="project" value="UniProtKB-UniRule"/>
</dbReference>
<dbReference type="GO" id="GO:0006417">
    <property type="term" value="P:regulation of translation"/>
    <property type="evidence" value="ECO:0007669"/>
    <property type="project" value="UniProtKB-UniRule"/>
</dbReference>
<dbReference type="CDD" id="cd13836">
    <property type="entry name" value="IHF_B"/>
    <property type="match status" value="1"/>
</dbReference>
<dbReference type="FunFam" id="4.10.520.10:FF:000003">
    <property type="entry name" value="Integration host factor subunit beta"/>
    <property type="match status" value="1"/>
</dbReference>
<dbReference type="Gene3D" id="4.10.520.10">
    <property type="entry name" value="IHF-like DNA-binding proteins"/>
    <property type="match status" value="1"/>
</dbReference>
<dbReference type="HAMAP" id="MF_00381">
    <property type="entry name" value="IHF_beta"/>
    <property type="match status" value="1"/>
</dbReference>
<dbReference type="InterPro" id="IPR000119">
    <property type="entry name" value="Hist_DNA-bd"/>
</dbReference>
<dbReference type="InterPro" id="IPR020816">
    <property type="entry name" value="Histone-like_DNA-bd_CS"/>
</dbReference>
<dbReference type="InterPro" id="IPR010992">
    <property type="entry name" value="IHF-like_DNA-bd_dom_sf"/>
</dbReference>
<dbReference type="InterPro" id="IPR005685">
    <property type="entry name" value="IHF_beta"/>
</dbReference>
<dbReference type="NCBIfam" id="TIGR00988">
    <property type="entry name" value="hip"/>
    <property type="match status" value="1"/>
</dbReference>
<dbReference type="NCBIfam" id="NF001222">
    <property type="entry name" value="PRK00199.1"/>
    <property type="match status" value="1"/>
</dbReference>
<dbReference type="PANTHER" id="PTHR33175">
    <property type="entry name" value="DNA-BINDING PROTEIN HU"/>
    <property type="match status" value="1"/>
</dbReference>
<dbReference type="PANTHER" id="PTHR33175:SF5">
    <property type="entry name" value="INTEGRATION HOST FACTOR SUBUNIT BETA"/>
    <property type="match status" value="1"/>
</dbReference>
<dbReference type="Pfam" id="PF00216">
    <property type="entry name" value="Bac_DNA_binding"/>
    <property type="match status" value="1"/>
</dbReference>
<dbReference type="PRINTS" id="PR01727">
    <property type="entry name" value="DNABINDINGHU"/>
</dbReference>
<dbReference type="SMART" id="SM00411">
    <property type="entry name" value="BHL"/>
    <property type="match status" value="1"/>
</dbReference>
<dbReference type="SUPFAM" id="SSF47729">
    <property type="entry name" value="IHF-like DNA-binding proteins"/>
    <property type="match status" value="1"/>
</dbReference>
<dbReference type="PROSITE" id="PS00045">
    <property type="entry name" value="HISTONE_LIKE"/>
    <property type="match status" value="1"/>
</dbReference>
<reference key="1">
    <citation type="submission" date="2007-02" db="EMBL/GenBank/DDBJ databases">
        <title>Complete sequence of chromosome of Shewanella baltica OS155.</title>
        <authorList>
            <consortium name="US DOE Joint Genome Institute"/>
            <person name="Copeland A."/>
            <person name="Lucas S."/>
            <person name="Lapidus A."/>
            <person name="Barry K."/>
            <person name="Detter J.C."/>
            <person name="Glavina del Rio T."/>
            <person name="Hammon N."/>
            <person name="Israni S."/>
            <person name="Dalin E."/>
            <person name="Tice H."/>
            <person name="Pitluck S."/>
            <person name="Sims D.R."/>
            <person name="Brettin T."/>
            <person name="Bruce D."/>
            <person name="Han C."/>
            <person name="Tapia R."/>
            <person name="Brainard J."/>
            <person name="Schmutz J."/>
            <person name="Larimer F."/>
            <person name="Land M."/>
            <person name="Hauser L."/>
            <person name="Kyrpides N."/>
            <person name="Mikhailova N."/>
            <person name="Brettar I."/>
            <person name="Klappenbach J."/>
            <person name="Konstantinidis K."/>
            <person name="Rodrigues J."/>
            <person name="Tiedje J."/>
            <person name="Richardson P."/>
        </authorList>
    </citation>
    <scope>NUCLEOTIDE SEQUENCE [LARGE SCALE GENOMIC DNA]</scope>
    <source>
        <strain>OS155 / ATCC BAA-1091</strain>
    </source>
</reference>
<comment type="function">
    <text evidence="1">This protein is one of the two subunits of integration host factor, a specific DNA-binding protein that functions in genetic recombination as well as in transcriptional and translational control.</text>
</comment>
<comment type="subunit">
    <text evidence="1">Heterodimer of an alpha and a beta chain.</text>
</comment>
<comment type="similarity">
    <text evidence="1">Belongs to the bacterial histone-like protein family.</text>
</comment>
<accession>A3D4A9</accession>
<organism>
    <name type="scientific">Shewanella baltica (strain OS155 / ATCC BAA-1091)</name>
    <dbReference type="NCBI Taxonomy" id="325240"/>
    <lineage>
        <taxon>Bacteria</taxon>
        <taxon>Pseudomonadati</taxon>
        <taxon>Pseudomonadota</taxon>
        <taxon>Gammaproteobacteria</taxon>
        <taxon>Alteromonadales</taxon>
        <taxon>Shewanellaceae</taxon>
        <taxon>Shewanella</taxon>
    </lineage>
</organism>